<dbReference type="EC" id="1.6.2.-" evidence="2"/>
<dbReference type="EMBL" id="U35642">
    <property type="protein sequence ID" value="AAB07599.1"/>
    <property type="molecule type" value="mRNA"/>
</dbReference>
<dbReference type="EMBL" id="BC102637">
    <property type="protein sequence ID" value="AAI02638.1"/>
    <property type="molecule type" value="mRNA"/>
</dbReference>
<dbReference type="PIR" id="S68149">
    <property type="entry name" value="TIBOBI"/>
</dbReference>
<dbReference type="RefSeq" id="NP_776414.1">
    <property type="nucleotide sequence ID" value="NM_173989.3"/>
</dbReference>
<dbReference type="SMR" id="P00978"/>
<dbReference type="FunCoup" id="P00978">
    <property type="interactions" value="330"/>
</dbReference>
<dbReference type="MEROPS" id="I02.006"/>
<dbReference type="GlyCosmos" id="P00978">
    <property type="glycosylation" value="3 sites, No reported glycans"/>
</dbReference>
<dbReference type="GlyGen" id="P00978">
    <property type="glycosylation" value="4 sites"/>
</dbReference>
<dbReference type="iPTMnet" id="P00978"/>
<dbReference type="PaxDb" id="9913-ENSBTAP00000020817"/>
<dbReference type="PeptideAtlas" id="P00978"/>
<dbReference type="GeneID" id="280996"/>
<dbReference type="KEGG" id="bta:280996"/>
<dbReference type="CTD" id="259"/>
<dbReference type="eggNOG" id="KOG4295">
    <property type="taxonomic scope" value="Eukaryota"/>
</dbReference>
<dbReference type="InParanoid" id="P00978"/>
<dbReference type="OrthoDB" id="9949223at2759"/>
<dbReference type="Proteomes" id="UP000009136">
    <property type="component" value="Unplaced"/>
</dbReference>
<dbReference type="GO" id="GO:0009986">
    <property type="term" value="C:cell surface"/>
    <property type="evidence" value="ECO:0000318"/>
    <property type="project" value="GO_Central"/>
</dbReference>
<dbReference type="GO" id="GO:0005829">
    <property type="term" value="C:cytosol"/>
    <property type="evidence" value="ECO:0007669"/>
    <property type="project" value="UniProtKB-SubCell"/>
</dbReference>
<dbReference type="GO" id="GO:0005783">
    <property type="term" value="C:endoplasmic reticulum"/>
    <property type="evidence" value="ECO:0007669"/>
    <property type="project" value="UniProtKB-SubCell"/>
</dbReference>
<dbReference type="GO" id="GO:0005576">
    <property type="term" value="C:extracellular region"/>
    <property type="evidence" value="ECO:0007669"/>
    <property type="project" value="UniProtKB-SubCell"/>
</dbReference>
<dbReference type="GO" id="GO:0005743">
    <property type="term" value="C:mitochondrial inner membrane"/>
    <property type="evidence" value="ECO:0007669"/>
    <property type="project" value="UniProtKB-SubCell"/>
</dbReference>
<dbReference type="GO" id="GO:0031965">
    <property type="term" value="C:nuclear membrane"/>
    <property type="evidence" value="ECO:0007669"/>
    <property type="project" value="UniProtKB-SubCell"/>
</dbReference>
<dbReference type="GO" id="GO:0005886">
    <property type="term" value="C:plasma membrane"/>
    <property type="evidence" value="ECO:0000250"/>
    <property type="project" value="UniProtKB"/>
</dbReference>
<dbReference type="GO" id="GO:0020037">
    <property type="term" value="F:heme binding"/>
    <property type="evidence" value="ECO:0000250"/>
    <property type="project" value="UniProtKB"/>
</dbReference>
<dbReference type="GO" id="GO:0019862">
    <property type="term" value="F:IgA binding"/>
    <property type="evidence" value="ECO:0000250"/>
    <property type="project" value="UniProtKB"/>
</dbReference>
<dbReference type="GO" id="GO:0016491">
    <property type="term" value="F:oxidoreductase activity"/>
    <property type="evidence" value="ECO:0007669"/>
    <property type="project" value="UniProtKB-KW"/>
</dbReference>
<dbReference type="GO" id="GO:0042803">
    <property type="term" value="F:protein homodimerization activity"/>
    <property type="evidence" value="ECO:0000250"/>
    <property type="project" value="UniProtKB"/>
</dbReference>
<dbReference type="GO" id="GO:0004867">
    <property type="term" value="F:serine-type endopeptidase inhibitor activity"/>
    <property type="evidence" value="ECO:0000318"/>
    <property type="project" value="GO_Central"/>
</dbReference>
<dbReference type="CDD" id="cd22596">
    <property type="entry name" value="Kunitz_bikunin_1-like"/>
    <property type="match status" value="1"/>
</dbReference>
<dbReference type="CDD" id="cd22597">
    <property type="entry name" value="Kunitz_bikunin_2-like"/>
    <property type="match status" value="1"/>
</dbReference>
<dbReference type="CDD" id="cd19418">
    <property type="entry name" value="lipocalin_A1M-like"/>
    <property type="match status" value="1"/>
</dbReference>
<dbReference type="FunFam" id="2.40.128.20:FF:000007">
    <property type="entry name" value="Alpha-1-microglobulin/bikunin precursor"/>
    <property type="match status" value="1"/>
</dbReference>
<dbReference type="FunFam" id="4.10.410.10:FF:000005">
    <property type="entry name" value="Pancreatic trypsin inhibitor"/>
    <property type="match status" value="1"/>
</dbReference>
<dbReference type="Gene3D" id="2.40.128.20">
    <property type="match status" value="1"/>
</dbReference>
<dbReference type="Gene3D" id="4.10.410.10">
    <property type="entry name" value="Pancreatic trypsin inhibitor Kunitz domain"/>
    <property type="match status" value="2"/>
</dbReference>
<dbReference type="InterPro" id="IPR002968">
    <property type="entry name" value="A1-microglobln"/>
</dbReference>
<dbReference type="InterPro" id="IPR029856">
    <property type="entry name" value="AMBP"/>
</dbReference>
<dbReference type="InterPro" id="IPR012674">
    <property type="entry name" value="Calycin"/>
</dbReference>
<dbReference type="InterPro" id="IPR002223">
    <property type="entry name" value="Kunitz_BPTI"/>
</dbReference>
<dbReference type="InterPro" id="IPR036880">
    <property type="entry name" value="Kunitz_BPTI_sf"/>
</dbReference>
<dbReference type="InterPro" id="IPR022272">
    <property type="entry name" value="Lipocalin_CS"/>
</dbReference>
<dbReference type="InterPro" id="IPR000566">
    <property type="entry name" value="Lipocln_cytosolic_FA-bd_dom"/>
</dbReference>
<dbReference type="InterPro" id="IPR020901">
    <property type="entry name" value="Prtase_inh_Kunz-CS"/>
</dbReference>
<dbReference type="PANTHER" id="PTHR46676">
    <property type="entry name" value="PROTEIN AMBP"/>
    <property type="match status" value="1"/>
</dbReference>
<dbReference type="PANTHER" id="PTHR46676:SF1">
    <property type="entry name" value="PROTEIN AMBP"/>
    <property type="match status" value="1"/>
</dbReference>
<dbReference type="Pfam" id="PF00014">
    <property type="entry name" value="Kunitz_BPTI"/>
    <property type="match status" value="2"/>
</dbReference>
<dbReference type="Pfam" id="PF00061">
    <property type="entry name" value="Lipocalin"/>
    <property type="match status" value="1"/>
</dbReference>
<dbReference type="PRINTS" id="PR01215">
    <property type="entry name" value="A1MCGLOBULIN"/>
</dbReference>
<dbReference type="PRINTS" id="PR00759">
    <property type="entry name" value="BASICPTASE"/>
</dbReference>
<dbReference type="PRINTS" id="PR00179">
    <property type="entry name" value="LIPOCALIN"/>
</dbReference>
<dbReference type="SMART" id="SM00131">
    <property type="entry name" value="KU"/>
    <property type="match status" value="2"/>
</dbReference>
<dbReference type="SUPFAM" id="SSF57362">
    <property type="entry name" value="BPTI-like"/>
    <property type="match status" value="2"/>
</dbReference>
<dbReference type="SUPFAM" id="SSF50814">
    <property type="entry name" value="Lipocalins"/>
    <property type="match status" value="1"/>
</dbReference>
<dbReference type="PROSITE" id="PS00280">
    <property type="entry name" value="BPTI_KUNITZ_1"/>
    <property type="match status" value="2"/>
</dbReference>
<dbReference type="PROSITE" id="PS50279">
    <property type="entry name" value="BPTI_KUNITZ_2"/>
    <property type="match status" value="2"/>
</dbReference>
<dbReference type="PROSITE" id="PS00213">
    <property type="entry name" value="LIPOCALIN"/>
    <property type="match status" value="1"/>
</dbReference>
<keyword id="KW-1003">Cell membrane</keyword>
<keyword id="KW-0157">Chromophore</keyword>
<keyword id="KW-0165">Cleavage on pair of basic residues</keyword>
<keyword id="KW-0963">Cytoplasm</keyword>
<keyword id="KW-0903">Direct protein sequencing</keyword>
<keyword id="KW-1015">Disulfide bond</keyword>
<keyword id="KW-0256">Endoplasmic reticulum</keyword>
<keyword id="KW-0272">Extracellular matrix</keyword>
<keyword id="KW-0325">Glycoprotein</keyword>
<keyword id="KW-0472">Membrane</keyword>
<keyword id="KW-0496">Mitochondrion</keyword>
<keyword id="KW-0999">Mitochondrion inner membrane</keyword>
<keyword id="KW-0539">Nucleus</keyword>
<keyword id="KW-0560">Oxidoreductase</keyword>
<keyword id="KW-0646">Protease inhibitor</keyword>
<keyword id="KW-0654">Proteoglycan</keyword>
<keyword id="KW-1185">Reference proteome</keyword>
<keyword id="KW-0677">Repeat</keyword>
<keyword id="KW-0964">Secreted</keyword>
<keyword id="KW-0722">Serine protease inhibitor</keyword>
<keyword id="KW-0732">Signal</keyword>
<name>AMBP_BOVIN</name>
<evidence type="ECO:0000250" key="1"/>
<evidence type="ECO:0000250" key="2">
    <source>
        <dbReference type="UniProtKB" id="P02760"/>
    </source>
</evidence>
<evidence type="ECO:0000250" key="3">
    <source>
        <dbReference type="UniProtKB" id="Q07456"/>
    </source>
</evidence>
<evidence type="ECO:0000250" key="4">
    <source>
        <dbReference type="UniProtKB" id="Q64240"/>
    </source>
</evidence>
<evidence type="ECO:0000255" key="5"/>
<evidence type="ECO:0000255" key="6">
    <source>
        <dbReference type="PROSITE-ProRule" id="PRU00031"/>
    </source>
</evidence>
<evidence type="ECO:0000269" key="7">
    <source>
    </source>
</evidence>
<evidence type="ECO:0000305" key="8"/>
<protein>
    <recommendedName>
        <fullName>Protein AMBP</fullName>
    </recommendedName>
    <component>
        <recommendedName>
            <fullName>Alpha-1-microglobulin</fullName>
            <ecNumber evidence="2">1.6.2.-</ecNumber>
        </recommendedName>
    </component>
    <component>
        <recommendedName>
            <fullName>Inter-alpha-trypsin inhibitor light chain</fullName>
            <shortName>ITI-LC</shortName>
        </recommendedName>
        <alternativeName>
            <fullName>BI-14</fullName>
        </alternativeName>
        <alternativeName>
            <fullName>Bikunin</fullName>
        </alternativeName>
        <alternativeName>
            <fullName>Cumulus extracellular matrix-stabilizing factor</fullName>
            <shortName>ESF</shortName>
        </alternativeName>
        <alternativeName>
            <fullName>HI-30</fullName>
        </alternativeName>
    </component>
    <component>
        <recommendedName>
            <fullName>Trypstatin</fullName>
        </recommendedName>
    </component>
</protein>
<gene>
    <name type="primary">AMBP</name>
    <name type="synonym">ITIL</name>
</gene>
<feature type="signal peptide" evidence="1">
    <location>
        <begin position="1"/>
        <end position="19"/>
    </location>
</feature>
<feature type="chain" id="PRO_0000017884" description="Alpha-1-microglobulin">
    <location>
        <begin position="20"/>
        <end position="203"/>
    </location>
</feature>
<feature type="chain" id="PRO_0000017885" description="Inter-alpha-trypsin inhibitor light chain">
    <location>
        <begin position="206"/>
        <end position="352"/>
    </location>
</feature>
<feature type="chain" id="PRO_0000318925" description="Trypstatin" evidence="1">
    <location>
        <begin position="284"/>
        <end position="344"/>
    </location>
</feature>
<feature type="domain" description="BPTI/Kunitz inhibitor 1" evidence="6">
    <location>
        <begin position="231"/>
        <end position="281"/>
    </location>
</feature>
<feature type="domain" description="BPTI/Kunitz inhibitor 2" evidence="6">
    <location>
        <begin position="287"/>
        <end position="337"/>
    </location>
</feature>
<feature type="binding site" description="covalent" evidence="2">
    <location>
        <position position="53"/>
    </location>
    <ligand>
        <name>3-hydroxy-L-kynurenine</name>
        <dbReference type="ChEBI" id="CHEBI:58125"/>
        <note>multimeric 3-hydroxykynurenine chromophore</note>
    </ligand>
</feature>
<feature type="binding site" description="covalent" evidence="2">
    <location>
        <position position="111"/>
    </location>
    <ligand>
        <name>3-hydroxy-L-kynurenine</name>
        <dbReference type="ChEBI" id="CHEBI:58125"/>
        <note>multimeric 3-hydroxykynurenine chromophore</note>
    </ligand>
</feature>
<feature type="binding site" description="covalent" evidence="2">
    <location>
        <position position="137"/>
    </location>
    <ligand>
        <name>3-hydroxy-L-kynurenine</name>
        <dbReference type="ChEBI" id="CHEBI:58125"/>
        <note>multimeric 3-hydroxykynurenine chromophore</note>
    </ligand>
</feature>
<feature type="binding site" description="covalent" evidence="2">
    <location>
        <position position="149"/>
    </location>
    <ligand>
        <name>3-hydroxy-L-kynurenine</name>
        <dbReference type="ChEBI" id="CHEBI:58125"/>
        <note>multimeric 3-hydroxykynurenine chromophore</note>
    </ligand>
</feature>
<feature type="site" description="Inhibitory (P1) (chymotrypsin, elastase)">
    <location>
        <begin position="241"/>
        <end position="242"/>
    </location>
</feature>
<feature type="site" description="Inhibitory (P1) (trypsin)">
    <location>
        <begin position="297"/>
        <end position="298"/>
    </location>
</feature>
<feature type="glycosylation site" description="N-linked (GlcNAc...) asparagine" evidence="5">
    <location>
        <position position="115"/>
    </location>
</feature>
<feature type="glycosylation site" description="O-linked (Xyl...) (chondroitin sulfate) serine" evidence="2">
    <location>
        <position position="215"/>
    </location>
</feature>
<feature type="glycosylation site" description="N-linked (GlcNAc...) asparagine" evidence="5">
    <location>
        <position position="223"/>
    </location>
</feature>
<feature type="glycosylation site" description="N-linked (GlcNAc...) asparagine" evidence="7">
    <location>
        <position position="250"/>
    </location>
</feature>
<feature type="disulfide bond" evidence="6">
    <location>
        <begin position="91"/>
        <end position="188"/>
    </location>
</feature>
<feature type="disulfide bond" evidence="6">
    <location>
        <begin position="231"/>
        <end position="281"/>
    </location>
</feature>
<feature type="disulfide bond" evidence="6">
    <location>
        <begin position="240"/>
        <end position="264"/>
    </location>
</feature>
<feature type="disulfide bond" evidence="6">
    <location>
        <begin position="256"/>
        <end position="277"/>
    </location>
</feature>
<feature type="disulfide bond" evidence="6">
    <location>
        <begin position="287"/>
        <end position="337"/>
    </location>
</feature>
<feature type="disulfide bond" evidence="6">
    <location>
        <begin position="296"/>
        <end position="320"/>
    </location>
</feature>
<feature type="disulfide bond" evidence="6">
    <location>
        <begin position="312"/>
        <end position="333"/>
    </location>
</feature>
<feature type="sequence conflict" description="In Ref. 2; AAI02638." evidence="8" ref="2">
    <original>I</original>
    <variation>K</variation>
    <location>
        <position position="71"/>
    </location>
</feature>
<feature type="sequence conflict" description="In Ref. 2; AAI02638." evidence="8" ref="2">
    <original>A</original>
    <variation>T</variation>
    <location>
        <position position="103"/>
    </location>
</feature>
<feature type="sequence conflict" description="In Ref. 2; AAI02638." evidence="8" ref="2">
    <original>L</original>
    <variation>V</variation>
    <location>
        <position position="200"/>
    </location>
</feature>
<feature type="sequence conflict" description="In Ref. 3; AA sequence." evidence="8" ref="3">
    <original>T</original>
    <variation>G</variation>
    <location>
        <position position="209"/>
    </location>
</feature>
<feature type="sequence conflict" description="In Ref. 3; AA sequence." evidence="8" ref="3">
    <original>A</original>
    <variation>D</variation>
    <location>
        <position position="217"/>
    </location>
</feature>
<feature type="sequence conflict" description="In Ref. 4; AA sequence and 5; AA sequence." evidence="8" ref="4 5">
    <original>G</original>
    <variation>L</variation>
    <location>
        <position position="268"/>
    </location>
</feature>
<feature type="sequence conflict" description="In Ref. 4; AA sequence and 5; AA sequence." evidence="8" ref="4 5">
    <original>E</original>
    <variation>Q</variation>
    <location>
        <position position="274"/>
    </location>
</feature>
<feature type="sequence conflict" description="In Ref. 4; AA sequence and 5; AA sequence." evidence="8" ref="4 5">
    <original>SY</original>
    <variation>AF</variation>
    <location>
        <begin position="298"/>
        <end position="299"/>
    </location>
</feature>
<feature type="sequence conflict" description="In Ref. 2; AAI02638." evidence="8" ref="2">
    <original>F</original>
    <variation>I</variation>
    <location>
        <position position="305"/>
    </location>
</feature>
<feature type="sequence conflict" description="In Ref. 4; AA sequence and 5; AA sequence." evidence="8" ref="4 5">
    <original>E</original>
    <variation>Q</variation>
    <location>
        <position position="330"/>
    </location>
</feature>
<feature type="sequence conflict" description="In Ref. 4; AA sequence and 5; AA sequence." evidence="8" ref="4 5">
    <original>E</original>
    <variation>R</variation>
    <location>
        <position position="346"/>
    </location>
</feature>
<reference key="1">
    <citation type="journal article" date="1996" name="Biochim. Biophys. Acta">
        <title>Bovine alpha 1-microglobulin/bikunin. Isolation and characterization of liver cDNA and urinary alpha 1-microglobulin.</title>
        <authorList>
            <person name="Lindqvist A."/>
            <person name="Aakerstroem B."/>
        </authorList>
    </citation>
    <scope>NUCLEOTIDE SEQUENCE [MRNA]</scope>
    <source>
        <tissue>Liver</tissue>
    </source>
</reference>
<reference key="2">
    <citation type="submission" date="2005-08" db="EMBL/GenBank/DDBJ databases">
        <authorList>
            <consortium name="NIH - Mammalian Gene Collection (MGC) project"/>
        </authorList>
    </citation>
    <scope>NUCLEOTIDE SEQUENCE [LARGE SCALE MRNA]</scope>
    <source>
        <strain>Hereford</strain>
        <tissue>Testis</tissue>
    </source>
</reference>
<reference key="3">
    <citation type="journal article" date="1992" name="J. Biol. Chem.">
        <title>Identification of a factor in fetal bovine serum that stabilizes the cumulus extracellular matrix. A role for a member of the inter-alpha-trypsin inhibitor family.</title>
        <authorList>
            <person name="Chen L."/>
            <person name="Mao S.J.T."/>
            <person name="Larsen W.J."/>
        </authorList>
    </citation>
    <scope>PROTEIN SEQUENCE OF 206-219</scope>
    <source>
        <tissue>Fetal serum</tissue>
    </source>
</reference>
<reference key="4">
    <citation type="journal article" date="1985" name="Biol. Chem. Hoppe-Seyler">
        <title>Kunitz-type proteinase inhibitors derived by limited proteolysis of the inter-alpha-trypsin inhibitor, X. The amino-acid sequences of the trypsin-released inhibitors from horse and pig inter-alpha-trypsin inhibitors.</title>
        <authorList>
            <person name="Hochstrasser K."/>
            <person name="Wachter E."/>
            <person name="Albrecht G.J."/>
            <person name="Reisinger P."/>
        </authorList>
    </citation>
    <scope>PROTEIN SEQUENCE OF 227-349</scope>
</reference>
<reference key="5">
    <citation type="journal article" date="1983" name="Hoppe-Seyler's Z. Physiol. Chem.">
        <title>Kunitz-type proteinase inhibitors derived by limited proteolysis of the inter-alpha-trypsin inhibitor, VII. Determination of the amino-acid sequence of the trypsin-released inhibitor from bovine inter-alpha-trypsin inhibitor.</title>
        <authorList>
            <person name="Hochstrasser K."/>
            <person name="Wachter E."/>
        </authorList>
    </citation>
    <scope>PROTEIN SEQUENCE OF 227-348</scope>
    <scope>GLYCOSYLATION AT ASN-250</scope>
</reference>
<reference key="6">
    <citation type="journal article" date="1983" name="Hoppe-Seyler's Z. Physiol. Chem.">
        <title>Kunitz-type proteinase inhibitors derived by limited proteolysis of the inter-alpha-trypsin inhibitor, VII. Characterization of the bovine inhibitor as double-headed trypsin-elastase inhibitor.</title>
        <authorList>
            <person name="Hochstrasser K."/>
            <person name="Albrecht G.J."/>
            <person name="Schoenberger O.L."/>
            <person name="Wachter E."/>
        </authorList>
    </citation>
    <scope>REACTIVE SITES</scope>
</reference>
<organism>
    <name type="scientific">Bos taurus</name>
    <name type="common">Bovine</name>
    <dbReference type="NCBI Taxonomy" id="9913"/>
    <lineage>
        <taxon>Eukaryota</taxon>
        <taxon>Metazoa</taxon>
        <taxon>Chordata</taxon>
        <taxon>Craniata</taxon>
        <taxon>Vertebrata</taxon>
        <taxon>Euteleostomi</taxon>
        <taxon>Mammalia</taxon>
        <taxon>Eutheria</taxon>
        <taxon>Laurasiatheria</taxon>
        <taxon>Artiodactyla</taxon>
        <taxon>Ruminantia</taxon>
        <taxon>Pecora</taxon>
        <taxon>Bovidae</taxon>
        <taxon>Bovinae</taxon>
        <taxon>Bos</taxon>
    </lineage>
</organism>
<accession>P00978</accession>
<accession>P35420</accession>
<accession>Q28020</accession>
<accession>Q3SZZ4</accession>
<sequence length="352" mass="39235">MRSLSGLLLLLTACLAVNASSVPTLPDDIQVQENFDLSRIYGKWFNVAVGSTCPWLKRFKEKMTMSTVVLIAGPTSKEISVTNTHRRKGVCESISGTYEKTSADGKFLYHKAKWNITMESYVVHTNYDEYAIFLTKKLSRRHGPTITVKLYGREPQLRESLLEEFREVALGVGIPEDAIFTMPDRGECVPGEQDPVPTPLSRARRAVLTQEEEGSGAGQPVTNFSKKADSCQLDYSQGPCLGLFKRYFYNGTSMACETFLYGGCMGNGNNFLSEKECLQTCRTVEACNLPIVQGPCRSYIQLWAFDAVKGKCVRFSYGGCKGNGNKFYSEKECKEYCGIPGEADEELLRFSN</sequence>
<comment type="function">
    <molecule>Alpha-1-microglobulin</molecule>
    <text evidence="2 3">Antioxidant and tissue repair protein with reductase, heme-binding and radical-scavenging activities. Removes and protects against harmful oxidants and repairs macromolecules in intravascular and extravascular spaces and in intracellular compartments. Intravascularly, plays a regulatory role in red cell homeostasis by preventing heme- and reactive oxygen species-induced cell damage. Binds and degrades free heme to protect fetal and adult red blood cells from hemolysis. Reduces extracellular methemoglobin, a Fe3+ (ferric) form of hemoglobin that cannot bind oxygen, back to the Fe2+ (ferrous) form deoxyhemoglobin, which has oxygen-carrying potential. Upon acute inflammation, inhibits oxidation of low-density lipoprotein particles by MPO and limits vascular damage. Extravascularly, protects from oxidation products formed on extracellular matrix structures and cell membranes. Catalyzes the reduction of carbonyl groups on oxidized collagen fibers and preserves cellular and extracellular matrix ultrastructures. Importantly, counteracts the oxidative damage at blood-placenta interface, preventing leakage of free fetal hemoglobin into the maternal circulation. Intracellularly, has a role in maintaining mitochondrial redox homeostasis. Bound to complex I of the respiratory chain of mitochondria, may scavenge free radicals and preserve mitochondrial ATP synthesis. Protects renal tubule epithelial cells from heme-induced oxidative damage to mitochondria. Reduces cytochrome c from Fe3+ (ferric) to the Fe2+ (ferrous) state through formation of superoxide anion radicals in the presence of ascorbate or NADH/NADPH electron donor cofactors, ascorbate being the preferred cofactor (By similarity). Has a chaperone role in facilitating the correct folding of bikunin in the endoplasmic reticulum compartment (By similarity).</text>
</comment>
<comment type="function">
    <molecule>Inter-alpha-trypsin inhibitor light chain</molecule>
    <text evidence="2 3">Kunitz-type serine protease inhibitor and structural component of extracellular matrix with a role in extracellular space remodeling and cell adhesion. Among others, has antiprotease activity toward kallikrein, a protease involved in airway inflammation; inhibits GZMK/granzyme, a granule-stored serine protease involved in NK and T cell cytotoxic responses; and inhibits PLG/plasmin, a protease required for activation of matrix metalloproteinases. As part of I-alpha-I complex, provides for the heavy chains to be transferred from I-alpha-I complex to hyaluronan in the presence of TNFAIP6, in a dynamic process that releases free bikunin and remodels extracellular matrix proteoglycan structures. Free bikunin, but not its heavy chain-bound form, acts as a potent protease inhibitor in airway secretions (By similarity). Part of hyaluronan-rich extracellular matrix that surrounds oocyte during cumulus oophorus expansion, an indispensable process for proper ovulation (By similarity). Also inhibits calcium oxalate crystallization (By similarity).</text>
</comment>
<comment type="function">
    <molecule>Trypstatin</molecule>
    <text evidence="4">Kunitz-type serine protease inhibitor. Has high catalytic efficiency for F10/blood coagulation factor Xa and may act as an anticoagulant by inhibiting prothrombin activation. Inhibits trypsin and mast cell CMA1/chymase and tryptase proteases.</text>
</comment>
<comment type="subunit">
    <molecule>Alpha-1-microglobulin</molecule>
    <text evidence="2 4">Monomer. Homodimer. In plasma, it occurs as a monomer or dimer and in covalently-linked complexes with immunoglobulin A (IgA), ALB/albumin and F2/prothrombin. Chromophore-bound alpha-1-microglobulin interacts with the constant region of immunoglobulin A. Chromophore-bound alpha-1-microglobulin interacts with ALB with molar ratio 2:1 and 1:1; this interaction does not prevent fatty acid binding to ALB. Interacts with F2/prothrombin (via N-terminus) with molar ratio 2:1 and 1:1; this interaction does not prevent the activation of prothrombin to thrombin. Interacts with NDUFAB1, a subunit of mitochondrial complex I (By similarity). Interacts with FN1 (By similarity).</text>
</comment>
<comment type="subunit">
    <molecule>Inter-alpha-trypsin inhibitor light chain</molecule>
    <text evidence="2">I-alpha-I plasma protease inhibitors are assembled from one or two heavy chains (HC) and one light chain, bikunin. Inter-alpha-inhibitor (I-alpha-I) is composed of ITIH1/HC1, ITIH2/HC2 and bikunin, and pre-alpha-inhibitor (P-alpha-I) of ITIH3/HC3 and bikunin. Interacts with TNFAIP6 (via Link domain).</text>
</comment>
<comment type="subunit">
    <molecule>Trypstatin</molecule>
    <text evidence="4">Monomer. Also occurs as a complex with tryptase in mast cells.</text>
</comment>
<comment type="subcellular location">
    <molecule>Alpha-1-microglobulin</molecule>
    <subcellularLocation>
        <location evidence="2">Secreted</location>
    </subcellularLocation>
    <subcellularLocation>
        <location evidence="2">Endoplasmic reticulum</location>
    </subcellularLocation>
    <subcellularLocation>
        <location evidence="2">Cytoplasm</location>
        <location evidence="2">Cytosol</location>
    </subcellularLocation>
    <subcellularLocation>
        <location evidence="2">Cell membrane</location>
        <topology evidence="2">Peripheral membrane protein</topology>
    </subcellularLocation>
    <subcellularLocation>
        <location evidence="2">Nucleus membrane</location>
        <topology evidence="2">Peripheral membrane protein</topology>
    </subcellularLocation>
    <subcellularLocation>
        <location evidence="2">Mitochondrion inner membrane</location>
        <topology evidence="2">Peripheral membrane protein</topology>
    </subcellularLocation>
    <subcellularLocation>
        <location evidence="2">Secreted</location>
        <location evidence="2">Extracellular space</location>
        <location evidence="2">Extracellular matrix</location>
    </subcellularLocation>
    <text evidence="2">The cellular uptake occurs via a non-endocytotic pathway and allows for localization to various membrane structures. A specific binding to plasma membrane suggests the presence of a cell receptor, yet to be identified. Directly binds collagen fibers type I.</text>
</comment>
<comment type="subcellular location">
    <molecule>Inter-alpha-trypsin inhibitor light chain</molecule>
    <subcellularLocation>
        <location evidence="2">Secreted</location>
    </subcellularLocation>
</comment>
<comment type="tissue specificity">
    <text>Expressed by the liver and secreted in plasma.</text>
</comment>
<comment type="domain">
    <molecule>Inter-alpha-trypsin inhibitor light chain</molecule>
    <text evidence="2">The Kunitz domains 1 and 2 serve as protease inhibitor domains.</text>
</comment>
<comment type="PTM">
    <text evidence="2">The precursor is proteolytically processed into separately functioning proteins.</text>
</comment>
<comment type="PTM">
    <molecule>Alpha-1-microglobulin</molecule>
    <text evidence="2">3-hydroxykynurenine, an oxidized tryptophan metabolite that is common in biological fluids, reacts with Cys-53, Lys-111, Lys-137, and Lys-149 to form heterogeneous polycyclic chromophores including hydroxanthommatin. The reaction by alpha-1-microglobulin is autocatalytic; the human protein forms chromophore even when expressed in insect and bacterial cells. The chromophore can react with accessible cysteines forming non-reducible thioether cross-links with other molecules of alpha-1-microglobulin or with other proteins such as Ig alpha-1 chain C region 'Cys-352'.</text>
</comment>
<comment type="PTM">
    <molecule>Inter-alpha-trypsin inhibitor light chain</molecule>
    <text evidence="2">Heavy chains are interlinked with bikunin via a chondroitin 4-sulfate bridge to the C-terminal aspartate.</text>
</comment>
<comment type="PTM">
    <molecule>Inter-alpha-trypsin inhibitor light chain</molecule>
    <text evidence="2">Proteolytically cleaved by PRSS3 at Kunitz domain 2.</text>
</comment>
<comment type="similarity">
    <text evidence="8">In the N-terminal section; belongs to the calycin superfamily. Lipocalin family.</text>
</comment>
<proteinExistence type="evidence at protein level"/>